<keyword id="KW-0004">4Fe-4S</keyword>
<keyword id="KW-0028">Amino-acid biosynthesis</keyword>
<keyword id="KW-0100">Branched-chain amino acid biosynthesis</keyword>
<keyword id="KW-0408">Iron</keyword>
<keyword id="KW-0411">Iron-sulfur</keyword>
<keyword id="KW-0432">Leucine biosynthesis</keyword>
<keyword id="KW-0456">Lyase</keyword>
<keyword id="KW-0479">Metal-binding</keyword>
<keyword id="KW-1185">Reference proteome</keyword>
<organism>
    <name type="scientific">Sulfurimonas denitrificans (strain ATCC 33889 / DSM 1251)</name>
    <name type="common">Thiomicrospira denitrificans (strain ATCC 33889 / DSM 1251)</name>
    <dbReference type="NCBI Taxonomy" id="326298"/>
    <lineage>
        <taxon>Bacteria</taxon>
        <taxon>Pseudomonadati</taxon>
        <taxon>Campylobacterota</taxon>
        <taxon>Epsilonproteobacteria</taxon>
        <taxon>Campylobacterales</taxon>
        <taxon>Sulfurimonadaceae</taxon>
        <taxon>Sulfurimonas</taxon>
    </lineage>
</organism>
<gene>
    <name evidence="1" type="primary">leuC</name>
    <name type="ordered locus">Suden_2017</name>
</gene>
<proteinExistence type="inferred from homology"/>
<feature type="chain" id="PRO_1000072952" description="3-isopropylmalate dehydratase large subunit">
    <location>
        <begin position="1"/>
        <end position="419"/>
    </location>
</feature>
<feature type="binding site" evidence="1">
    <location>
        <position position="302"/>
    </location>
    <ligand>
        <name>[4Fe-4S] cluster</name>
        <dbReference type="ChEBI" id="CHEBI:49883"/>
    </ligand>
</feature>
<feature type="binding site" evidence="1">
    <location>
        <position position="362"/>
    </location>
    <ligand>
        <name>[4Fe-4S] cluster</name>
        <dbReference type="ChEBI" id="CHEBI:49883"/>
    </ligand>
</feature>
<feature type="binding site" evidence="1">
    <location>
        <position position="365"/>
    </location>
    <ligand>
        <name>[4Fe-4S] cluster</name>
        <dbReference type="ChEBI" id="CHEBI:49883"/>
    </ligand>
</feature>
<protein>
    <recommendedName>
        <fullName evidence="1">3-isopropylmalate dehydratase large subunit</fullName>
        <ecNumber evidence="1">4.2.1.33</ecNumber>
    </recommendedName>
    <alternativeName>
        <fullName evidence="1">Alpha-IPM isomerase</fullName>
        <shortName evidence="1">IPMI</shortName>
    </alternativeName>
    <alternativeName>
        <fullName evidence="1">Isopropylmalate isomerase</fullName>
    </alternativeName>
</protein>
<name>LEUC_SULDN</name>
<comment type="function">
    <text evidence="1">Catalyzes the isomerization between 2-isopropylmalate and 3-isopropylmalate, via the formation of 2-isopropylmaleate.</text>
</comment>
<comment type="catalytic activity">
    <reaction evidence="1">
        <text>(2R,3S)-3-isopropylmalate = (2S)-2-isopropylmalate</text>
        <dbReference type="Rhea" id="RHEA:32287"/>
        <dbReference type="ChEBI" id="CHEBI:1178"/>
        <dbReference type="ChEBI" id="CHEBI:35121"/>
        <dbReference type="EC" id="4.2.1.33"/>
    </reaction>
</comment>
<comment type="cofactor">
    <cofactor evidence="1">
        <name>[4Fe-4S] cluster</name>
        <dbReference type="ChEBI" id="CHEBI:49883"/>
    </cofactor>
    <text evidence="1">Binds 1 [4Fe-4S] cluster per subunit.</text>
</comment>
<comment type="pathway">
    <text evidence="1">Amino-acid biosynthesis; L-leucine biosynthesis; L-leucine from 3-methyl-2-oxobutanoate: step 2/4.</text>
</comment>
<comment type="subunit">
    <text evidence="1">Heterodimer of LeuC and LeuD.</text>
</comment>
<comment type="similarity">
    <text evidence="1">Belongs to the aconitase/IPM isomerase family. LeuC type 2 subfamily.</text>
</comment>
<dbReference type="EC" id="4.2.1.33" evidence="1"/>
<dbReference type="EMBL" id="CP000153">
    <property type="protein sequence ID" value="ABB45291.1"/>
    <property type="molecule type" value="Genomic_DNA"/>
</dbReference>
<dbReference type="RefSeq" id="WP_011373631.1">
    <property type="nucleotide sequence ID" value="NC_007575.1"/>
</dbReference>
<dbReference type="SMR" id="Q30NZ0"/>
<dbReference type="STRING" id="326298.Suden_2017"/>
<dbReference type="KEGG" id="tdn:Suden_2017"/>
<dbReference type="eggNOG" id="COG0065">
    <property type="taxonomic scope" value="Bacteria"/>
</dbReference>
<dbReference type="HOGENOM" id="CLU_006714_3_4_7"/>
<dbReference type="OrthoDB" id="9764318at2"/>
<dbReference type="UniPathway" id="UPA00048">
    <property type="reaction ID" value="UER00071"/>
</dbReference>
<dbReference type="Proteomes" id="UP000002714">
    <property type="component" value="Chromosome"/>
</dbReference>
<dbReference type="GO" id="GO:0003861">
    <property type="term" value="F:3-isopropylmalate dehydratase activity"/>
    <property type="evidence" value="ECO:0007669"/>
    <property type="project" value="UniProtKB-UniRule"/>
</dbReference>
<dbReference type="GO" id="GO:0051539">
    <property type="term" value="F:4 iron, 4 sulfur cluster binding"/>
    <property type="evidence" value="ECO:0007669"/>
    <property type="project" value="UniProtKB-KW"/>
</dbReference>
<dbReference type="GO" id="GO:0046872">
    <property type="term" value="F:metal ion binding"/>
    <property type="evidence" value="ECO:0007669"/>
    <property type="project" value="UniProtKB-KW"/>
</dbReference>
<dbReference type="GO" id="GO:0009098">
    <property type="term" value="P:L-leucine biosynthetic process"/>
    <property type="evidence" value="ECO:0007669"/>
    <property type="project" value="UniProtKB-UniRule"/>
</dbReference>
<dbReference type="CDD" id="cd01583">
    <property type="entry name" value="IPMI"/>
    <property type="match status" value="1"/>
</dbReference>
<dbReference type="Gene3D" id="3.30.499.10">
    <property type="entry name" value="Aconitase, domain 3"/>
    <property type="match status" value="2"/>
</dbReference>
<dbReference type="HAMAP" id="MF_01027">
    <property type="entry name" value="LeuC_type2"/>
    <property type="match status" value="1"/>
</dbReference>
<dbReference type="InterPro" id="IPR015931">
    <property type="entry name" value="Acnase/IPM_dHydase_lsu_aba_1/3"/>
</dbReference>
<dbReference type="InterPro" id="IPR001030">
    <property type="entry name" value="Acoase/IPM_deHydtase_lsu_aba"/>
</dbReference>
<dbReference type="InterPro" id="IPR018136">
    <property type="entry name" value="Aconitase_4Fe-4S_BS"/>
</dbReference>
<dbReference type="InterPro" id="IPR036008">
    <property type="entry name" value="Aconitase_4Fe-4S_dom"/>
</dbReference>
<dbReference type="InterPro" id="IPR011826">
    <property type="entry name" value="HAcnase/IPMdehydase_lsu_prok"/>
</dbReference>
<dbReference type="InterPro" id="IPR006251">
    <property type="entry name" value="Homoacnase/IPMdehydase_lsu"/>
</dbReference>
<dbReference type="InterPro" id="IPR050067">
    <property type="entry name" value="IPM_dehydratase_rel_enz"/>
</dbReference>
<dbReference type="InterPro" id="IPR033941">
    <property type="entry name" value="IPMI_cat"/>
</dbReference>
<dbReference type="NCBIfam" id="TIGR01343">
    <property type="entry name" value="hacA_fam"/>
    <property type="match status" value="1"/>
</dbReference>
<dbReference type="NCBIfam" id="TIGR02086">
    <property type="entry name" value="IPMI_arch"/>
    <property type="match status" value="1"/>
</dbReference>
<dbReference type="NCBIfam" id="NF001614">
    <property type="entry name" value="PRK00402.1"/>
    <property type="match status" value="1"/>
</dbReference>
<dbReference type="PANTHER" id="PTHR43822:SF16">
    <property type="entry name" value="3-ISOPROPYLMALATE DEHYDRATASE LARGE SUBUNIT 2"/>
    <property type="match status" value="1"/>
</dbReference>
<dbReference type="PANTHER" id="PTHR43822">
    <property type="entry name" value="HOMOACONITASE, MITOCHONDRIAL-RELATED"/>
    <property type="match status" value="1"/>
</dbReference>
<dbReference type="Pfam" id="PF00330">
    <property type="entry name" value="Aconitase"/>
    <property type="match status" value="1"/>
</dbReference>
<dbReference type="PRINTS" id="PR00415">
    <property type="entry name" value="ACONITASE"/>
</dbReference>
<dbReference type="SUPFAM" id="SSF53732">
    <property type="entry name" value="Aconitase iron-sulfur domain"/>
    <property type="match status" value="1"/>
</dbReference>
<dbReference type="PROSITE" id="PS00450">
    <property type="entry name" value="ACONITASE_1"/>
    <property type="match status" value="1"/>
</dbReference>
<dbReference type="PROSITE" id="PS01244">
    <property type="entry name" value="ACONITASE_2"/>
    <property type="match status" value="1"/>
</dbReference>
<accession>Q30NZ0</accession>
<sequence>MAQTITEKIFSQHVGRAVFAGEIIRCNIDMVIGNDITTPISIKAFEDSGATKLANPDGFSIVLDHFIPAKDIASANQARISRDFAKKYSLKNFFDEKDMGIEHALLPEKGLVVPGDVIIGADSHTCTHGALGAFSTGMGSTDLAFAMITGGNWFKVPESIKVNLSGKPSKYTTGKDIILEIIRLIGVDGALYKTLEFTGSTIEHLSIDDRFSMCNMAIEAGAKSGIVAYDETTKAFLADKNLAREPRIHYSDADASYVQILNIDVASLDPVIAYPFLPSNGHSVVQAQKDNIKIDQAFIGSCTNGRLSDLKVAAEILKGKRVHPDVRLIVTPGTQMILREANKLGYIDIIVDAGGVVSNPTCGACLGGYMGILGDNEVAISTTNRNFVGRMGSRSSKVYLANSAVAAISAIKGYITDPR</sequence>
<reference key="1">
    <citation type="journal article" date="2008" name="Appl. Environ. Microbiol.">
        <title>Genome of the epsilonproteobacterial chemolithoautotroph Sulfurimonas denitrificans.</title>
        <authorList>
            <person name="Sievert S.M."/>
            <person name="Scott K.M."/>
            <person name="Klotz M.G."/>
            <person name="Chain P.S.G."/>
            <person name="Hauser L.J."/>
            <person name="Hemp J."/>
            <person name="Huegler M."/>
            <person name="Land M."/>
            <person name="Lapidus A."/>
            <person name="Larimer F.W."/>
            <person name="Lucas S."/>
            <person name="Malfatti S.A."/>
            <person name="Meyer F."/>
            <person name="Paulsen I.T."/>
            <person name="Ren Q."/>
            <person name="Simon J."/>
            <person name="Bailey K."/>
            <person name="Diaz E."/>
            <person name="Fitzpatrick K.A."/>
            <person name="Glover B."/>
            <person name="Gwatney N."/>
            <person name="Korajkic A."/>
            <person name="Long A."/>
            <person name="Mobberley J.M."/>
            <person name="Pantry S.N."/>
            <person name="Pazder G."/>
            <person name="Peterson S."/>
            <person name="Quintanilla J.D."/>
            <person name="Sprinkle R."/>
            <person name="Stephens J."/>
            <person name="Thomas P."/>
            <person name="Vaughn R."/>
            <person name="Weber M.J."/>
            <person name="Wooten L.L."/>
        </authorList>
    </citation>
    <scope>NUCLEOTIDE SEQUENCE [LARGE SCALE GENOMIC DNA]</scope>
    <source>
        <strain>ATCC 33889 / DSM 1251</strain>
    </source>
</reference>
<evidence type="ECO:0000255" key="1">
    <source>
        <dbReference type="HAMAP-Rule" id="MF_01027"/>
    </source>
</evidence>